<evidence type="ECO:0000250" key="1"/>
<evidence type="ECO:0000255" key="2">
    <source>
        <dbReference type="PROSITE-ProRule" id="PRU00599"/>
    </source>
</evidence>
<evidence type="ECO:0000305" key="3"/>
<gene>
    <name type="primary">ADF1</name>
    <name type="synonym">ABP1</name>
</gene>
<sequence length="139" mass="16168">MANSSSGLAVNDECKVKFRELKSRRTFRFIVFRIDDTDMEIKVDRLGEPNQGYGDFTDSLPANECRYAIYDLDFTTIENCQKSKIFFFSWSPDTARTRSKMLYASSKDRFRRELDGIQCEIQATDPSEMSLDIVRSRTN</sequence>
<feature type="chain" id="PRO_0000214932" description="Actin-depolymerizing factor 1">
    <location>
        <begin position="1"/>
        <end position="139"/>
    </location>
</feature>
<feature type="domain" description="ADF-H" evidence="2">
    <location>
        <begin position="5"/>
        <end position="139"/>
    </location>
</feature>
<name>ADF1_MAIZE</name>
<accession>P46251</accession>
<reference key="1">
    <citation type="journal article" date="1995" name="Plant Physiol.">
        <title>A Zea mays pollen cDNA encoding a putative actin-depolymerizing factor.</title>
        <authorList>
            <person name="Rozycka M."/>
            <person name="Lopez I."/>
            <person name="Khan S."/>
            <person name="Greenland A.J."/>
            <person name="Hussey P.J."/>
        </authorList>
    </citation>
    <scope>NUCLEOTIDE SEQUENCE [MRNA]</scope>
    <source>
        <strain>cv. A188</strain>
        <tissue>Pollen</tissue>
    </source>
</reference>
<organism>
    <name type="scientific">Zea mays</name>
    <name type="common">Maize</name>
    <dbReference type="NCBI Taxonomy" id="4577"/>
    <lineage>
        <taxon>Eukaryota</taxon>
        <taxon>Viridiplantae</taxon>
        <taxon>Streptophyta</taxon>
        <taxon>Embryophyta</taxon>
        <taxon>Tracheophyta</taxon>
        <taxon>Spermatophyta</taxon>
        <taxon>Magnoliopsida</taxon>
        <taxon>Liliopsida</taxon>
        <taxon>Poales</taxon>
        <taxon>Poaceae</taxon>
        <taxon>PACMAD clade</taxon>
        <taxon>Panicoideae</taxon>
        <taxon>Andropogonodae</taxon>
        <taxon>Andropogoneae</taxon>
        <taxon>Tripsacinae</taxon>
        <taxon>Zea</taxon>
    </lineage>
</organism>
<comment type="function">
    <text evidence="1">Actin-depolymerizing protein. Severs actin filaments (F-actin) and binds to actin monomers (By similarity).</text>
</comment>
<comment type="tissue specificity">
    <text>Expressed in pollen.</text>
</comment>
<comment type="similarity">
    <text evidence="3">Belongs to the actin-binding proteins ADF family.</text>
</comment>
<protein>
    <recommendedName>
        <fullName>Actin-depolymerizing factor 1</fullName>
        <shortName>ADF-1</shortName>
        <shortName>ZmADF1</shortName>
    </recommendedName>
    <alternativeName>
        <fullName>ZmABP1</fullName>
    </alternativeName>
</protein>
<keyword id="KW-0009">Actin-binding</keyword>
<keyword id="KW-1185">Reference proteome</keyword>
<proteinExistence type="evidence at transcript level"/>
<dbReference type="EMBL" id="X80820">
    <property type="protein sequence ID" value="CAA56786.1"/>
    <property type="molecule type" value="mRNA"/>
</dbReference>
<dbReference type="PIR" id="T02882">
    <property type="entry name" value="T02882"/>
</dbReference>
<dbReference type="RefSeq" id="NP_001105463.1">
    <property type="nucleotide sequence ID" value="NM_001111993.1"/>
</dbReference>
<dbReference type="SMR" id="P46251"/>
<dbReference type="FunCoup" id="P46251">
    <property type="interactions" value="2609"/>
</dbReference>
<dbReference type="STRING" id="4577.P46251"/>
<dbReference type="PaxDb" id="4577-GRMZM2G117603_P01"/>
<dbReference type="GeneID" id="542430"/>
<dbReference type="KEGG" id="zma:542430"/>
<dbReference type="MaizeGDB" id="113737"/>
<dbReference type="eggNOG" id="KOG1735">
    <property type="taxonomic scope" value="Eukaryota"/>
</dbReference>
<dbReference type="InParanoid" id="P46251"/>
<dbReference type="OrthoDB" id="10249245at2759"/>
<dbReference type="Proteomes" id="UP000007305">
    <property type="component" value="Unplaced"/>
</dbReference>
<dbReference type="ExpressionAtlas" id="P46251">
    <property type="expression patterns" value="baseline and differential"/>
</dbReference>
<dbReference type="GO" id="GO:0015629">
    <property type="term" value="C:actin cytoskeleton"/>
    <property type="evidence" value="ECO:0000318"/>
    <property type="project" value="GO_Central"/>
</dbReference>
<dbReference type="GO" id="GO:0005737">
    <property type="term" value="C:cytoplasm"/>
    <property type="evidence" value="ECO:0000318"/>
    <property type="project" value="GO_Central"/>
</dbReference>
<dbReference type="GO" id="GO:0051015">
    <property type="term" value="F:actin filament binding"/>
    <property type="evidence" value="ECO:0000318"/>
    <property type="project" value="GO_Central"/>
</dbReference>
<dbReference type="GO" id="GO:0030042">
    <property type="term" value="P:actin filament depolymerization"/>
    <property type="evidence" value="ECO:0000318"/>
    <property type="project" value="GO_Central"/>
</dbReference>
<dbReference type="CDD" id="cd11286">
    <property type="entry name" value="ADF_cofilin_like"/>
    <property type="match status" value="1"/>
</dbReference>
<dbReference type="Gene3D" id="3.40.20.10">
    <property type="entry name" value="Severin"/>
    <property type="match status" value="1"/>
</dbReference>
<dbReference type="InterPro" id="IPR002108">
    <property type="entry name" value="ADF-H"/>
</dbReference>
<dbReference type="InterPro" id="IPR029006">
    <property type="entry name" value="ADF-H/Gelsolin-like_dom_sf"/>
</dbReference>
<dbReference type="InterPro" id="IPR017904">
    <property type="entry name" value="ADF/Cofilin"/>
</dbReference>
<dbReference type="PANTHER" id="PTHR11913">
    <property type="entry name" value="COFILIN-RELATED"/>
    <property type="match status" value="1"/>
</dbReference>
<dbReference type="Pfam" id="PF00241">
    <property type="entry name" value="Cofilin_ADF"/>
    <property type="match status" value="1"/>
</dbReference>
<dbReference type="SMART" id="SM00102">
    <property type="entry name" value="ADF"/>
    <property type="match status" value="1"/>
</dbReference>
<dbReference type="SUPFAM" id="SSF55753">
    <property type="entry name" value="Actin depolymerizing proteins"/>
    <property type="match status" value="1"/>
</dbReference>
<dbReference type="PROSITE" id="PS51263">
    <property type="entry name" value="ADF_H"/>
    <property type="match status" value="1"/>
</dbReference>